<accession>P60485</accession>
<accession>O07320</accession>
<organism>
    <name type="scientific">Staphylococcus aureus (strain Mu50 / ATCC 700699)</name>
    <dbReference type="NCBI Taxonomy" id="158878"/>
    <lineage>
        <taxon>Bacteria</taxon>
        <taxon>Bacillati</taxon>
        <taxon>Bacillota</taxon>
        <taxon>Bacilli</taxon>
        <taxon>Bacillales</taxon>
        <taxon>Staphylococcaceae</taxon>
        <taxon>Staphylococcus</taxon>
    </lineage>
</organism>
<keyword id="KW-0963">Cytoplasm</keyword>
<keyword id="KW-0489">Methyltransferase</keyword>
<keyword id="KW-0698">rRNA processing</keyword>
<keyword id="KW-0949">S-adenosyl-L-methionine</keyword>
<keyword id="KW-0808">Transferase</keyword>
<comment type="function">
    <text evidence="1">Specifically methylates the N4 position of cytidine in position 1402 (C1402) of 16S rRNA.</text>
</comment>
<comment type="catalytic activity">
    <reaction evidence="1">
        <text>cytidine(1402) in 16S rRNA + S-adenosyl-L-methionine = N(4)-methylcytidine(1402) in 16S rRNA + S-adenosyl-L-homocysteine + H(+)</text>
        <dbReference type="Rhea" id="RHEA:42928"/>
        <dbReference type="Rhea" id="RHEA-COMP:10286"/>
        <dbReference type="Rhea" id="RHEA-COMP:10287"/>
        <dbReference type="ChEBI" id="CHEBI:15378"/>
        <dbReference type="ChEBI" id="CHEBI:57856"/>
        <dbReference type="ChEBI" id="CHEBI:59789"/>
        <dbReference type="ChEBI" id="CHEBI:74506"/>
        <dbReference type="ChEBI" id="CHEBI:82748"/>
        <dbReference type="EC" id="2.1.1.199"/>
    </reaction>
</comment>
<comment type="subcellular location">
    <subcellularLocation>
        <location evidence="1">Cytoplasm</location>
    </subcellularLocation>
</comment>
<comment type="similarity">
    <text evidence="1">Belongs to the methyltransferase superfamily. RsmH family.</text>
</comment>
<dbReference type="EC" id="2.1.1.199" evidence="1"/>
<dbReference type="EMBL" id="BA000017">
    <property type="protein sequence ID" value="BAB57341.1"/>
    <property type="molecule type" value="Genomic_DNA"/>
</dbReference>
<dbReference type="RefSeq" id="WP_000468384.1">
    <property type="nucleotide sequence ID" value="NC_002758.2"/>
</dbReference>
<dbReference type="SMR" id="P60485"/>
<dbReference type="KEGG" id="sav:SAV1179"/>
<dbReference type="HOGENOM" id="CLU_038422_2_0_9"/>
<dbReference type="PhylomeDB" id="P60485"/>
<dbReference type="Proteomes" id="UP000002481">
    <property type="component" value="Chromosome"/>
</dbReference>
<dbReference type="GO" id="GO:0005737">
    <property type="term" value="C:cytoplasm"/>
    <property type="evidence" value="ECO:0007669"/>
    <property type="project" value="UniProtKB-SubCell"/>
</dbReference>
<dbReference type="GO" id="GO:0071424">
    <property type="term" value="F:rRNA (cytosine-N4-)-methyltransferase activity"/>
    <property type="evidence" value="ECO:0007669"/>
    <property type="project" value="UniProtKB-UniRule"/>
</dbReference>
<dbReference type="GO" id="GO:0070475">
    <property type="term" value="P:rRNA base methylation"/>
    <property type="evidence" value="ECO:0007669"/>
    <property type="project" value="UniProtKB-UniRule"/>
</dbReference>
<dbReference type="FunFam" id="1.10.150.170:FF:000001">
    <property type="entry name" value="Ribosomal RNA small subunit methyltransferase H"/>
    <property type="match status" value="1"/>
</dbReference>
<dbReference type="Gene3D" id="1.10.150.170">
    <property type="entry name" value="Putative methyltransferase TM0872, insert domain"/>
    <property type="match status" value="1"/>
</dbReference>
<dbReference type="Gene3D" id="3.40.50.150">
    <property type="entry name" value="Vaccinia Virus protein VP39"/>
    <property type="match status" value="1"/>
</dbReference>
<dbReference type="HAMAP" id="MF_01007">
    <property type="entry name" value="16SrRNA_methyltr_H"/>
    <property type="match status" value="1"/>
</dbReference>
<dbReference type="InterPro" id="IPR002903">
    <property type="entry name" value="RsmH"/>
</dbReference>
<dbReference type="InterPro" id="IPR023397">
    <property type="entry name" value="SAM-dep_MeTrfase_MraW_recog"/>
</dbReference>
<dbReference type="InterPro" id="IPR029063">
    <property type="entry name" value="SAM-dependent_MTases_sf"/>
</dbReference>
<dbReference type="NCBIfam" id="TIGR00006">
    <property type="entry name" value="16S rRNA (cytosine(1402)-N(4))-methyltransferase RsmH"/>
    <property type="match status" value="1"/>
</dbReference>
<dbReference type="PANTHER" id="PTHR11265:SF0">
    <property type="entry name" value="12S RRNA N4-METHYLCYTIDINE METHYLTRANSFERASE"/>
    <property type="match status" value="1"/>
</dbReference>
<dbReference type="PANTHER" id="PTHR11265">
    <property type="entry name" value="S-ADENOSYL-METHYLTRANSFERASE MRAW"/>
    <property type="match status" value="1"/>
</dbReference>
<dbReference type="Pfam" id="PF01795">
    <property type="entry name" value="Methyltransf_5"/>
    <property type="match status" value="1"/>
</dbReference>
<dbReference type="PIRSF" id="PIRSF004486">
    <property type="entry name" value="MraW"/>
    <property type="match status" value="1"/>
</dbReference>
<dbReference type="SUPFAM" id="SSF81799">
    <property type="entry name" value="Putative methyltransferase TM0872, insert domain"/>
    <property type="match status" value="1"/>
</dbReference>
<dbReference type="SUPFAM" id="SSF53335">
    <property type="entry name" value="S-adenosyl-L-methionine-dependent methyltransferases"/>
    <property type="match status" value="1"/>
</dbReference>
<sequence length="311" mass="35682">MFHHISVMLNETIDYLNVKENGVYIDCTLGGAGHALYLLNQLNDDGRLIAIDQDQTAIDNAKEVLKDHLHKVTFVHSNFRELTQILKDLNIEKVDGIYYDLGVSSPQLDIPERGFSYHHDATLDMRMDQTQELTAYEIVNNWSYEALVKIFYRYGEEKFSKQIARRIEAHREQQPITTTLELVDIIKEGIPAKARRKGGHPAKRVFQALRIAVNDELSAFEDSIEQAIELVKVDGRISVITFHSLEDRLCKQVFQEYEKGPEVPRGLPVIPEAYTPKLKRVNRKPITATEEDLDDNNRARSAKLRVAEILK</sequence>
<name>RSMH_STAAM</name>
<evidence type="ECO:0000255" key="1">
    <source>
        <dbReference type="HAMAP-Rule" id="MF_01007"/>
    </source>
</evidence>
<reference key="1">
    <citation type="journal article" date="2001" name="Lancet">
        <title>Whole genome sequencing of meticillin-resistant Staphylococcus aureus.</title>
        <authorList>
            <person name="Kuroda M."/>
            <person name="Ohta T."/>
            <person name="Uchiyama I."/>
            <person name="Baba T."/>
            <person name="Yuzawa H."/>
            <person name="Kobayashi I."/>
            <person name="Cui L."/>
            <person name="Oguchi A."/>
            <person name="Aoki K."/>
            <person name="Nagai Y."/>
            <person name="Lian J.-Q."/>
            <person name="Ito T."/>
            <person name="Kanamori M."/>
            <person name="Matsumaru H."/>
            <person name="Maruyama A."/>
            <person name="Murakami H."/>
            <person name="Hosoyama A."/>
            <person name="Mizutani-Ui Y."/>
            <person name="Takahashi N.K."/>
            <person name="Sawano T."/>
            <person name="Inoue R."/>
            <person name="Kaito C."/>
            <person name="Sekimizu K."/>
            <person name="Hirakawa H."/>
            <person name="Kuhara S."/>
            <person name="Goto S."/>
            <person name="Yabuzaki J."/>
            <person name="Kanehisa M."/>
            <person name="Yamashita A."/>
            <person name="Oshima K."/>
            <person name="Furuya K."/>
            <person name="Yoshino C."/>
            <person name="Shiba T."/>
            <person name="Hattori M."/>
            <person name="Ogasawara N."/>
            <person name="Hayashi H."/>
            <person name="Hiramatsu K."/>
        </authorList>
    </citation>
    <scope>NUCLEOTIDE SEQUENCE [LARGE SCALE GENOMIC DNA]</scope>
    <source>
        <strain>Mu50 / ATCC 700699</strain>
    </source>
</reference>
<protein>
    <recommendedName>
        <fullName evidence="1">Ribosomal RNA small subunit methyltransferase H</fullName>
        <ecNumber evidence="1">2.1.1.199</ecNumber>
    </recommendedName>
    <alternativeName>
        <fullName evidence="1">16S rRNA m(4)C1402 methyltransferase</fullName>
    </alternativeName>
    <alternativeName>
        <fullName evidence="1">rRNA (cytosine-N(4)-)-methyltransferase RsmH</fullName>
    </alternativeName>
</protein>
<gene>
    <name evidence="1" type="primary">rsmH</name>
    <name type="synonym">mraW</name>
    <name type="ordered locus">SAV1179</name>
</gene>
<feature type="chain" id="PRO_0000108706" description="Ribosomal RNA small subunit methyltransferase H">
    <location>
        <begin position="1"/>
        <end position="311"/>
    </location>
</feature>
<feature type="binding site" evidence="1">
    <location>
        <begin position="32"/>
        <end position="34"/>
    </location>
    <ligand>
        <name>S-adenosyl-L-methionine</name>
        <dbReference type="ChEBI" id="CHEBI:59789"/>
    </ligand>
</feature>
<feature type="binding site" evidence="1">
    <location>
        <position position="52"/>
    </location>
    <ligand>
        <name>S-adenosyl-L-methionine</name>
        <dbReference type="ChEBI" id="CHEBI:59789"/>
    </ligand>
</feature>
<feature type="binding site" evidence="1">
    <location>
        <position position="79"/>
    </location>
    <ligand>
        <name>S-adenosyl-L-methionine</name>
        <dbReference type="ChEBI" id="CHEBI:59789"/>
    </ligand>
</feature>
<feature type="binding site" evidence="1">
    <location>
        <position position="100"/>
    </location>
    <ligand>
        <name>S-adenosyl-L-methionine</name>
        <dbReference type="ChEBI" id="CHEBI:59789"/>
    </ligand>
</feature>
<feature type="binding site" evidence="1">
    <location>
        <position position="107"/>
    </location>
    <ligand>
        <name>S-adenosyl-L-methionine</name>
        <dbReference type="ChEBI" id="CHEBI:59789"/>
    </ligand>
</feature>
<proteinExistence type="inferred from homology"/>